<accession>A5IHR4</accession>
<sequence length="216" mass="22896">MMIGLLGRKIGMTRVFTPEGVSVPVSVVEVQPNRVSQVKTAANDGYSAVQLTGGTKKSSKVSKPVAGHFAKAQIDAGDMQVEFRIDSEDAFTPGQVISVADVFTAGQYVDVSGLTKGKGFAGTVKRHNFRTQDASHGNSRSHRVPGSIGQNQTPGRVFKGKKMAGHMGNARCTIQSLELVKVDSERNLLLIKGAIPGAPGSRVEIKPAVKKQARGE</sequence>
<name>RL3_LEGPC</name>
<reference key="1">
    <citation type="submission" date="2006-11" db="EMBL/GenBank/DDBJ databases">
        <title>Identification and characterization of a new conjugation/ type IVA secretion system (trb/tra) of L. pneumophila Corby localized on a mobile genomic island.</title>
        <authorList>
            <person name="Gloeckner G."/>
            <person name="Albert-Weissenberger C."/>
            <person name="Weinmann E."/>
            <person name="Jacobi S."/>
            <person name="Schunder E."/>
            <person name="Steinert M."/>
            <person name="Buchrieser C."/>
            <person name="Hacker J."/>
            <person name="Heuner K."/>
        </authorList>
    </citation>
    <scope>NUCLEOTIDE SEQUENCE [LARGE SCALE GENOMIC DNA]</scope>
    <source>
        <strain>Corby</strain>
    </source>
</reference>
<feature type="chain" id="PRO_1000052070" description="Large ribosomal subunit protein uL3">
    <location>
        <begin position="1"/>
        <end position="216"/>
    </location>
</feature>
<feature type="region of interest" description="Disordered" evidence="2">
    <location>
        <begin position="132"/>
        <end position="155"/>
    </location>
</feature>
<feature type="modified residue" description="N5-methylglutamine" evidence="1">
    <location>
        <position position="152"/>
    </location>
</feature>
<comment type="function">
    <text evidence="1">One of the primary rRNA binding proteins, it binds directly near the 3'-end of the 23S rRNA, where it nucleates assembly of the 50S subunit.</text>
</comment>
<comment type="subunit">
    <text evidence="1">Part of the 50S ribosomal subunit. Forms a cluster with proteins L14 and L19.</text>
</comment>
<comment type="PTM">
    <text evidence="1">Methylated by PrmB.</text>
</comment>
<comment type="similarity">
    <text evidence="1">Belongs to the universal ribosomal protein uL3 family.</text>
</comment>
<gene>
    <name evidence="1" type="primary">rplC</name>
    <name type="ordered locus">LPC_3013</name>
</gene>
<evidence type="ECO:0000255" key="1">
    <source>
        <dbReference type="HAMAP-Rule" id="MF_01325"/>
    </source>
</evidence>
<evidence type="ECO:0000256" key="2">
    <source>
        <dbReference type="SAM" id="MobiDB-lite"/>
    </source>
</evidence>
<evidence type="ECO:0000305" key="3"/>
<protein>
    <recommendedName>
        <fullName evidence="1">Large ribosomal subunit protein uL3</fullName>
    </recommendedName>
    <alternativeName>
        <fullName evidence="3">50S ribosomal protein L3</fullName>
    </alternativeName>
</protein>
<proteinExistence type="inferred from homology"/>
<organism>
    <name type="scientific">Legionella pneumophila (strain Corby)</name>
    <dbReference type="NCBI Taxonomy" id="400673"/>
    <lineage>
        <taxon>Bacteria</taxon>
        <taxon>Pseudomonadati</taxon>
        <taxon>Pseudomonadota</taxon>
        <taxon>Gammaproteobacteria</taxon>
        <taxon>Legionellales</taxon>
        <taxon>Legionellaceae</taxon>
        <taxon>Legionella</taxon>
    </lineage>
</organism>
<keyword id="KW-0488">Methylation</keyword>
<keyword id="KW-0687">Ribonucleoprotein</keyword>
<keyword id="KW-0689">Ribosomal protein</keyword>
<keyword id="KW-0694">RNA-binding</keyword>
<keyword id="KW-0699">rRNA-binding</keyword>
<dbReference type="EMBL" id="CP000675">
    <property type="protein sequence ID" value="ABQ56914.1"/>
    <property type="molecule type" value="Genomic_DNA"/>
</dbReference>
<dbReference type="SMR" id="A5IHR4"/>
<dbReference type="KEGG" id="lpc:LPC_3013"/>
<dbReference type="HOGENOM" id="CLU_044142_4_1_6"/>
<dbReference type="GO" id="GO:0022625">
    <property type="term" value="C:cytosolic large ribosomal subunit"/>
    <property type="evidence" value="ECO:0007669"/>
    <property type="project" value="TreeGrafter"/>
</dbReference>
<dbReference type="GO" id="GO:0019843">
    <property type="term" value="F:rRNA binding"/>
    <property type="evidence" value="ECO:0007669"/>
    <property type="project" value="UniProtKB-UniRule"/>
</dbReference>
<dbReference type="GO" id="GO:0003735">
    <property type="term" value="F:structural constituent of ribosome"/>
    <property type="evidence" value="ECO:0007669"/>
    <property type="project" value="InterPro"/>
</dbReference>
<dbReference type="GO" id="GO:0006412">
    <property type="term" value="P:translation"/>
    <property type="evidence" value="ECO:0007669"/>
    <property type="project" value="UniProtKB-UniRule"/>
</dbReference>
<dbReference type="FunFam" id="2.40.30.10:FF:000004">
    <property type="entry name" value="50S ribosomal protein L3"/>
    <property type="match status" value="1"/>
</dbReference>
<dbReference type="FunFam" id="3.30.160.810:FF:000001">
    <property type="entry name" value="50S ribosomal protein L3"/>
    <property type="match status" value="1"/>
</dbReference>
<dbReference type="Gene3D" id="3.30.160.810">
    <property type="match status" value="1"/>
</dbReference>
<dbReference type="Gene3D" id="2.40.30.10">
    <property type="entry name" value="Translation factors"/>
    <property type="match status" value="1"/>
</dbReference>
<dbReference type="HAMAP" id="MF_01325_B">
    <property type="entry name" value="Ribosomal_uL3_B"/>
    <property type="match status" value="1"/>
</dbReference>
<dbReference type="InterPro" id="IPR000597">
    <property type="entry name" value="Ribosomal_uL3"/>
</dbReference>
<dbReference type="InterPro" id="IPR019927">
    <property type="entry name" value="Ribosomal_uL3_bac/org-type"/>
</dbReference>
<dbReference type="InterPro" id="IPR019926">
    <property type="entry name" value="Ribosomal_uL3_CS"/>
</dbReference>
<dbReference type="InterPro" id="IPR009000">
    <property type="entry name" value="Transl_B-barrel_sf"/>
</dbReference>
<dbReference type="NCBIfam" id="TIGR03625">
    <property type="entry name" value="L3_bact"/>
    <property type="match status" value="1"/>
</dbReference>
<dbReference type="PANTHER" id="PTHR11229">
    <property type="entry name" value="50S RIBOSOMAL PROTEIN L3"/>
    <property type="match status" value="1"/>
</dbReference>
<dbReference type="PANTHER" id="PTHR11229:SF16">
    <property type="entry name" value="LARGE RIBOSOMAL SUBUNIT PROTEIN UL3C"/>
    <property type="match status" value="1"/>
</dbReference>
<dbReference type="Pfam" id="PF00297">
    <property type="entry name" value="Ribosomal_L3"/>
    <property type="match status" value="1"/>
</dbReference>
<dbReference type="SUPFAM" id="SSF50447">
    <property type="entry name" value="Translation proteins"/>
    <property type="match status" value="1"/>
</dbReference>
<dbReference type="PROSITE" id="PS00474">
    <property type="entry name" value="RIBOSOMAL_L3"/>
    <property type="match status" value="1"/>
</dbReference>